<proteinExistence type="inferred from homology"/>
<name>SYT_BURL3</name>
<feature type="chain" id="PRO_1000020358" description="Threonine--tRNA ligase">
    <location>
        <begin position="1"/>
        <end position="635"/>
    </location>
</feature>
<feature type="domain" description="TGS" evidence="2">
    <location>
        <begin position="1"/>
        <end position="61"/>
    </location>
</feature>
<feature type="region of interest" description="Catalytic" evidence="1">
    <location>
        <begin position="242"/>
        <end position="533"/>
    </location>
</feature>
<feature type="binding site" evidence="1">
    <location>
        <position position="333"/>
    </location>
    <ligand>
        <name>Zn(2+)</name>
        <dbReference type="ChEBI" id="CHEBI:29105"/>
    </ligand>
</feature>
<feature type="binding site" evidence="1">
    <location>
        <position position="384"/>
    </location>
    <ligand>
        <name>Zn(2+)</name>
        <dbReference type="ChEBI" id="CHEBI:29105"/>
    </ligand>
</feature>
<feature type="binding site" evidence="1">
    <location>
        <position position="510"/>
    </location>
    <ligand>
        <name>Zn(2+)</name>
        <dbReference type="ChEBI" id="CHEBI:29105"/>
    </ligand>
</feature>
<comment type="function">
    <text evidence="1">Catalyzes the attachment of threonine to tRNA(Thr) in a two-step reaction: L-threonine is first activated by ATP to form Thr-AMP and then transferred to the acceptor end of tRNA(Thr). Also edits incorrectly charged L-seryl-tRNA(Thr).</text>
</comment>
<comment type="catalytic activity">
    <reaction evidence="1">
        <text>tRNA(Thr) + L-threonine + ATP = L-threonyl-tRNA(Thr) + AMP + diphosphate + H(+)</text>
        <dbReference type="Rhea" id="RHEA:24624"/>
        <dbReference type="Rhea" id="RHEA-COMP:9670"/>
        <dbReference type="Rhea" id="RHEA-COMP:9704"/>
        <dbReference type="ChEBI" id="CHEBI:15378"/>
        <dbReference type="ChEBI" id="CHEBI:30616"/>
        <dbReference type="ChEBI" id="CHEBI:33019"/>
        <dbReference type="ChEBI" id="CHEBI:57926"/>
        <dbReference type="ChEBI" id="CHEBI:78442"/>
        <dbReference type="ChEBI" id="CHEBI:78534"/>
        <dbReference type="ChEBI" id="CHEBI:456215"/>
        <dbReference type="EC" id="6.1.1.3"/>
    </reaction>
</comment>
<comment type="cofactor">
    <cofactor evidence="1">
        <name>Zn(2+)</name>
        <dbReference type="ChEBI" id="CHEBI:29105"/>
    </cofactor>
    <text evidence="1">Binds 1 zinc ion per subunit.</text>
</comment>
<comment type="subunit">
    <text evidence="1">Homodimer.</text>
</comment>
<comment type="subcellular location">
    <subcellularLocation>
        <location evidence="1">Cytoplasm</location>
    </subcellularLocation>
</comment>
<comment type="similarity">
    <text evidence="1">Belongs to the class-II aminoacyl-tRNA synthetase family.</text>
</comment>
<keyword id="KW-0030">Aminoacyl-tRNA synthetase</keyword>
<keyword id="KW-0067">ATP-binding</keyword>
<keyword id="KW-0963">Cytoplasm</keyword>
<keyword id="KW-0436">Ligase</keyword>
<keyword id="KW-0479">Metal-binding</keyword>
<keyword id="KW-0547">Nucleotide-binding</keyword>
<keyword id="KW-0648">Protein biosynthesis</keyword>
<keyword id="KW-0694">RNA-binding</keyword>
<keyword id="KW-0820">tRNA-binding</keyword>
<keyword id="KW-0862">Zinc</keyword>
<accession>Q39H55</accession>
<reference key="1">
    <citation type="submission" date="2005-10" db="EMBL/GenBank/DDBJ databases">
        <title>Complete sequence of chromosome 1 of Burkholderia sp. 383.</title>
        <authorList>
            <consortium name="US DOE Joint Genome Institute"/>
            <person name="Copeland A."/>
            <person name="Lucas S."/>
            <person name="Lapidus A."/>
            <person name="Barry K."/>
            <person name="Detter J.C."/>
            <person name="Glavina T."/>
            <person name="Hammon N."/>
            <person name="Israni S."/>
            <person name="Pitluck S."/>
            <person name="Chain P."/>
            <person name="Malfatti S."/>
            <person name="Shin M."/>
            <person name="Vergez L."/>
            <person name="Schmutz J."/>
            <person name="Larimer F."/>
            <person name="Land M."/>
            <person name="Kyrpides N."/>
            <person name="Lykidis A."/>
            <person name="Richardson P."/>
        </authorList>
    </citation>
    <scope>NUCLEOTIDE SEQUENCE [LARGE SCALE GENOMIC DNA]</scope>
    <source>
        <strain>ATCC 17760 / DSM 23089 / LMG 22485 / NCIMB 9086 / R18194 / 383</strain>
    </source>
</reference>
<organism>
    <name type="scientific">Burkholderia lata (strain ATCC 17760 / DSM 23089 / LMG 22485 / NCIMB 9086 / R18194 / 383)</name>
    <dbReference type="NCBI Taxonomy" id="482957"/>
    <lineage>
        <taxon>Bacteria</taxon>
        <taxon>Pseudomonadati</taxon>
        <taxon>Pseudomonadota</taxon>
        <taxon>Betaproteobacteria</taxon>
        <taxon>Burkholderiales</taxon>
        <taxon>Burkholderiaceae</taxon>
        <taxon>Burkholderia</taxon>
        <taxon>Burkholderia cepacia complex</taxon>
    </lineage>
</organism>
<sequence length="635" mass="72244">MVSIRLPDGSVRQYEHPVTVAEVAASIGPGLAKAALGGKLDGELVDTSAVIDRDASLAIVTDKDADGLDIIRHSTAHLLAYAVKELYPDAQVTIGPVIDNGFYYDFSYNRPFTPEDLEKIEKRMQELVKKDEPVTRRVVSRDEAAGYFRSIGEKYKAEIIESIPQSDEIKLYSHGGFTDLCRGPHVPSTGKLKVFKLMKVAGAYWRGDSKNEQLQRIYGTAWTRKEDQDQYLHMLEEAEKRDHRKLGKQLDLFHMQEESPGMVFWHPKGWALWQQVEQYMRRRVNEAGYLEIKTPMIMDRSLWEASGHWQNYRENMFTTESEKRDYAIKPMNCPGHVQVFKHGLRSYRDLPLRYAEFGSCHRNEASGALHGLMRVRGFVQDDAHIFCTEDQFISESIAFNTLAMSVYKDFGFDHIDIKLSLRPEQRAGTDETWDRAEQGLRDALTACGLTWEELPGEGAFYGPKIEYHIKDALGRSWQCGTLQLDMVLPERLGAEYVADDSSRRRPVMLHRAIVGSMERFLGILIEHHAGAMPAWLAPFQAVVLNIAESQAEYAQSLAQSLQKQGVRVTADLRNEKISYKIREHTLEKVPYLLVVGDKERDAQTVAVRARGGVDLGVMPVEAFVERLQEDLRSFK</sequence>
<evidence type="ECO:0000255" key="1">
    <source>
        <dbReference type="HAMAP-Rule" id="MF_00184"/>
    </source>
</evidence>
<evidence type="ECO:0000255" key="2">
    <source>
        <dbReference type="PROSITE-ProRule" id="PRU01228"/>
    </source>
</evidence>
<dbReference type="EC" id="6.1.1.3" evidence="1"/>
<dbReference type="EMBL" id="CP000151">
    <property type="protein sequence ID" value="ABB08211.1"/>
    <property type="molecule type" value="Genomic_DNA"/>
</dbReference>
<dbReference type="RefSeq" id="WP_011351778.1">
    <property type="nucleotide sequence ID" value="NC_007510.1"/>
</dbReference>
<dbReference type="SMR" id="Q39H55"/>
<dbReference type="GeneID" id="45094510"/>
<dbReference type="KEGG" id="bur:Bcep18194_A4615"/>
<dbReference type="PATRIC" id="fig|482957.22.peg.1520"/>
<dbReference type="HOGENOM" id="CLU_008554_0_1_4"/>
<dbReference type="Proteomes" id="UP000002705">
    <property type="component" value="Chromosome 1"/>
</dbReference>
<dbReference type="GO" id="GO:0005829">
    <property type="term" value="C:cytosol"/>
    <property type="evidence" value="ECO:0007669"/>
    <property type="project" value="TreeGrafter"/>
</dbReference>
<dbReference type="GO" id="GO:0005524">
    <property type="term" value="F:ATP binding"/>
    <property type="evidence" value="ECO:0007669"/>
    <property type="project" value="UniProtKB-UniRule"/>
</dbReference>
<dbReference type="GO" id="GO:0046872">
    <property type="term" value="F:metal ion binding"/>
    <property type="evidence" value="ECO:0007669"/>
    <property type="project" value="UniProtKB-KW"/>
</dbReference>
<dbReference type="GO" id="GO:0004829">
    <property type="term" value="F:threonine-tRNA ligase activity"/>
    <property type="evidence" value="ECO:0007669"/>
    <property type="project" value="UniProtKB-UniRule"/>
</dbReference>
<dbReference type="GO" id="GO:0000049">
    <property type="term" value="F:tRNA binding"/>
    <property type="evidence" value="ECO:0007669"/>
    <property type="project" value="UniProtKB-KW"/>
</dbReference>
<dbReference type="GO" id="GO:0006435">
    <property type="term" value="P:threonyl-tRNA aminoacylation"/>
    <property type="evidence" value="ECO:0007669"/>
    <property type="project" value="UniProtKB-UniRule"/>
</dbReference>
<dbReference type="CDD" id="cd01667">
    <property type="entry name" value="TGS_ThrRS"/>
    <property type="match status" value="1"/>
</dbReference>
<dbReference type="CDD" id="cd00860">
    <property type="entry name" value="ThrRS_anticodon"/>
    <property type="match status" value="1"/>
</dbReference>
<dbReference type="CDD" id="cd00771">
    <property type="entry name" value="ThrRS_core"/>
    <property type="match status" value="1"/>
</dbReference>
<dbReference type="FunFam" id="3.10.20.30:FF:000005">
    <property type="entry name" value="Threonine--tRNA ligase"/>
    <property type="match status" value="1"/>
</dbReference>
<dbReference type="FunFam" id="3.30.54.20:FF:000002">
    <property type="entry name" value="Threonine--tRNA ligase"/>
    <property type="match status" value="1"/>
</dbReference>
<dbReference type="FunFam" id="3.30.930.10:FF:000002">
    <property type="entry name" value="Threonine--tRNA ligase"/>
    <property type="match status" value="1"/>
</dbReference>
<dbReference type="FunFam" id="3.40.50.800:FF:000001">
    <property type="entry name" value="Threonine--tRNA ligase"/>
    <property type="match status" value="1"/>
</dbReference>
<dbReference type="FunFam" id="3.30.980.10:FF:000005">
    <property type="entry name" value="Threonyl-tRNA synthetase, mitochondrial"/>
    <property type="match status" value="1"/>
</dbReference>
<dbReference type="Gene3D" id="3.10.20.30">
    <property type="match status" value="1"/>
</dbReference>
<dbReference type="Gene3D" id="3.30.54.20">
    <property type="match status" value="1"/>
</dbReference>
<dbReference type="Gene3D" id="3.40.50.800">
    <property type="entry name" value="Anticodon-binding domain"/>
    <property type="match status" value="1"/>
</dbReference>
<dbReference type="Gene3D" id="3.30.930.10">
    <property type="entry name" value="Bira Bifunctional Protein, Domain 2"/>
    <property type="match status" value="1"/>
</dbReference>
<dbReference type="Gene3D" id="3.30.980.10">
    <property type="entry name" value="Threonyl-trna Synthetase, Chain A, domain 2"/>
    <property type="match status" value="1"/>
</dbReference>
<dbReference type="HAMAP" id="MF_00184">
    <property type="entry name" value="Thr_tRNA_synth"/>
    <property type="match status" value="1"/>
</dbReference>
<dbReference type="InterPro" id="IPR002314">
    <property type="entry name" value="aa-tRNA-synt_IIb"/>
</dbReference>
<dbReference type="InterPro" id="IPR006195">
    <property type="entry name" value="aa-tRNA-synth_II"/>
</dbReference>
<dbReference type="InterPro" id="IPR045864">
    <property type="entry name" value="aa-tRNA-synth_II/BPL/LPL"/>
</dbReference>
<dbReference type="InterPro" id="IPR004154">
    <property type="entry name" value="Anticodon-bd"/>
</dbReference>
<dbReference type="InterPro" id="IPR036621">
    <property type="entry name" value="Anticodon-bd_dom_sf"/>
</dbReference>
<dbReference type="InterPro" id="IPR012675">
    <property type="entry name" value="Beta-grasp_dom_sf"/>
</dbReference>
<dbReference type="InterPro" id="IPR004095">
    <property type="entry name" value="TGS"/>
</dbReference>
<dbReference type="InterPro" id="IPR012676">
    <property type="entry name" value="TGS-like"/>
</dbReference>
<dbReference type="InterPro" id="IPR002320">
    <property type="entry name" value="Thr-tRNA-ligase_IIa"/>
</dbReference>
<dbReference type="InterPro" id="IPR018163">
    <property type="entry name" value="Thr/Ala-tRNA-synth_IIc_edit"/>
</dbReference>
<dbReference type="InterPro" id="IPR047246">
    <property type="entry name" value="ThrRS_anticodon"/>
</dbReference>
<dbReference type="InterPro" id="IPR033728">
    <property type="entry name" value="ThrRS_core"/>
</dbReference>
<dbReference type="InterPro" id="IPR012947">
    <property type="entry name" value="tRNA_SAD"/>
</dbReference>
<dbReference type="NCBIfam" id="TIGR00418">
    <property type="entry name" value="thrS"/>
    <property type="match status" value="1"/>
</dbReference>
<dbReference type="PANTHER" id="PTHR11451:SF44">
    <property type="entry name" value="THREONINE--TRNA LIGASE, CHLOROPLASTIC_MITOCHONDRIAL 2"/>
    <property type="match status" value="1"/>
</dbReference>
<dbReference type="PANTHER" id="PTHR11451">
    <property type="entry name" value="THREONINE-TRNA LIGASE"/>
    <property type="match status" value="1"/>
</dbReference>
<dbReference type="Pfam" id="PF03129">
    <property type="entry name" value="HGTP_anticodon"/>
    <property type="match status" value="1"/>
</dbReference>
<dbReference type="Pfam" id="PF02824">
    <property type="entry name" value="TGS"/>
    <property type="match status" value="1"/>
</dbReference>
<dbReference type="Pfam" id="PF00587">
    <property type="entry name" value="tRNA-synt_2b"/>
    <property type="match status" value="1"/>
</dbReference>
<dbReference type="Pfam" id="PF07973">
    <property type="entry name" value="tRNA_SAD"/>
    <property type="match status" value="1"/>
</dbReference>
<dbReference type="PRINTS" id="PR01047">
    <property type="entry name" value="TRNASYNTHTHR"/>
</dbReference>
<dbReference type="SMART" id="SM00863">
    <property type="entry name" value="tRNA_SAD"/>
    <property type="match status" value="1"/>
</dbReference>
<dbReference type="SUPFAM" id="SSF52954">
    <property type="entry name" value="Class II aaRS ABD-related"/>
    <property type="match status" value="1"/>
</dbReference>
<dbReference type="SUPFAM" id="SSF55681">
    <property type="entry name" value="Class II aaRS and biotin synthetases"/>
    <property type="match status" value="1"/>
</dbReference>
<dbReference type="SUPFAM" id="SSF81271">
    <property type="entry name" value="TGS-like"/>
    <property type="match status" value="1"/>
</dbReference>
<dbReference type="SUPFAM" id="SSF55186">
    <property type="entry name" value="ThrRS/AlaRS common domain"/>
    <property type="match status" value="1"/>
</dbReference>
<dbReference type="PROSITE" id="PS50862">
    <property type="entry name" value="AA_TRNA_LIGASE_II"/>
    <property type="match status" value="1"/>
</dbReference>
<dbReference type="PROSITE" id="PS51880">
    <property type="entry name" value="TGS"/>
    <property type="match status" value="1"/>
</dbReference>
<gene>
    <name evidence="1" type="primary">thrS</name>
    <name type="ordered locus">Bcep18194_A4615</name>
</gene>
<protein>
    <recommendedName>
        <fullName evidence="1">Threonine--tRNA ligase</fullName>
        <ecNumber evidence="1">6.1.1.3</ecNumber>
    </recommendedName>
    <alternativeName>
        <fullName evidence="1">Threonyl-tRNA synthetase</fullName>
        <shortName evidence="1">ThrRS</shortName>
    </alternativeName>
</protein>